<dbReference type="EMBL" id="CP000653">
    <property type="protein sequence ID" value="ABP61101.1"/>
    <property type="molecule type" value="Genomic_DNA"/>
</dbReference>
<dbReference type="RefSeq" id="WP_015959434.1">
    <property type="nucleotide sequence ID" value="NC_009436.1"/>
</dbReference>
<dbReference type="SMR" id="A4WBM1"/>
<dbReference type="STRING" id="399742.Ent638_2432"/>
<dbReference type="GeneID" id="93309588"/>
<dbReference type="KEGG" id="ent:Ent638_2432"/>
<dbReference type="eggNOG" id="COG0217">
    <property type="taxonomic scope" value="Bacteria"/>
</dbReference>
<dbReference type="HOGENOM" id="CLU_062974_2_2_6"/>
<dbReference type="OrthoDB" id="9781053at2"/>
<dbReference type="Proteomes" id="UP000000230">
    <property type="component" value="Chromosome"/>
</dbReference>
<dbReference type="GO" id="GO:0005829">
    <property type="term" value="C:cytosol"/>
    <property type="evidence" value="ECO:0007669"/>
    <property type="project" value="TreeGrafter"/>
</dbReference>
<dbReference type="GO" id="GO:0003677">
    <property type="term" value="F:DNA binding"/>
    <property type="evidence" value="ECO:0007669"/>
    <property type="project" value="UniProtKB-UniRule"/>
</dbReference>
<dbReference type="GO" id="GO:0006355">
    <property type="term" value="P:regulation of DNA-templated transcription"/>
    <property type="evidence" value="ECO:0007669"/>
    <property type="project" value="UniProtKB-UniRule"/>
</dbReference>
<dbReference type="FunFam" id="1.10.10.200:FF:000001">
    <property type="entry name" value="Probable transcriptional regulatory protein YebC"/>
    <property type="match status" value="1"/>
</dbReference>
<dbReference type="FunFam" id="3.30.70.980:FF:000002">
    <property type="entry name" value="Probable transcriptional regulatory protein YebC"/>
    <property type="match status" value="1"/>
</dbReference>
<dbReference type="Gene3D" id="1.10.10.200">
    <property type="match status" value="1"/>
</dbReference>
<dbReference type="Gene3D" id="3.30.70.980">
    <property type="match status" value="2"/>
</dbReference>
<dbReference type="HAMAP" id="MF_00693">
    <property type="entry name" value="Transcrip_reg_TACO1"/>
    <property type="match status" value="1"/>
</dbReference>
<dbReference type="InterPro" id="IPR017856">
    <property type="entry name" value="Integrase-like_N"/>
</dbReference>
<dbReference type="InterPro" id="IPR048300">
    <property type="entry name" value="TACO1_YebC-like_2nd/3rd_dom"/>
</dbReference>
<dbReference type="InterPro" id="IPR049083">
    <property type="entry name" value="TACO1_YebC_N"/>
</dbReference>
<dbReference type="InterPro" id="IPR002876">
    <property type="entry name" value="Transcrip_reg_TACO1-like"/>
</dbReference>
<dbReference type="InterPro" id="IPR026564">
    <property type="entry name" value="Transcrip_reg_TACO1-like_dom3"/>
</dbReference>
<dbReference type="InterPro" id="IPR029072">
    <property type="entry name" value="YebC-like"/>
</dbReference>
<dbReference type="NCBIfam" id="NF001030">
    <property type="entry name" value="PRK00110.1"/>
    <property type="match status" value="1"/>
</dbReference>
<dbReference type="NCBIfam" id="NF009044">
    <property type="entry name" value="PRK12378.1"/>
    <property type="match status" value="1"/>
</dbReference>
<dbReference type="NCBIfam" id="TIGR01033">
    <property type="entry name" value="YebC/PmpR family DNA-binding transcriptional regulator"/>
    <property type="match status" value="1"/>
</dbReference>
<dbReference type="PANTHER" id="PTHR12532:SF6">
    <property type="entry name" value="TRANSCRIPTIONAL REGULATORY PROTEIN YEBC-RELATED"/>
    <property type="match status" value="1"/>
</dbReference>
<dbReference type="PANTHER" id="PTHR12532">
    <property type="entry name" value="TRANSLATIONAL ACTIVATOR OF CYTOCHROME C OXIDASE 1"/>
    <property type="match status" value="1"/>
</dbReference>
<dbReference type="Pfam" id="PF20772">
    <property type="entry name" value="TACO1_YebC_N"/>
    <property type="match status" value="1"/>
</dbReference>
<dbReference type="Pfam" id="PF01709">
    <property type="entry name" value="Transcrip_reg"/>
    <property type="match status" value="1"/>
</dbReference>
<dbReference type="SUPFAM" id="SSF75625">
    <property type="entry name" value="YebC-like"/>
    <property type="match status" value="1"/>
</dbReference>
<proteinExistence type="inferred from homology"/>
<keyword id="KW-0963">Cytoplasm</keyword>
<keyword id="KW-0238">DNA-binding</keyword>
<keyword id="KW-0804">Transcription</keyword>
<keyword id="KW-0805">Transcription regulation</keyword>
<evidence type="ECO:0000255" key="1">
    <source>
        <dbReference type="HAMAP-Rule" id="MF_00693"/>
    </source>
</evidence>
<name>Y2432_ENT38</name>
<feature type="chain" id="PRO_1000062037" description="Probable transcriptional regulatory protein Ent638_2432">
    <location>
        <begin position="1"/>
        <end position="246"/>
    </location>
</feature>
<reference key="1">
    <citation type="journal article" date="2010" name="PLoS Genet.">
        <title>Genome sequence of the plant growth promoting endophytic bacterium Enterobacter sp. 638.</title>
        <authorList>
            <person name="Taghavi S."/>
            <person name="van der Lelie D."/>
            <person name="Hoffman A."/>
            <person name="Zhang Y.B."/>
            <person name="Walla M.D."/>
            <person name="Vangronsveld J."/>
            <person name="Newman L."/>
            <person name="Monchy S."/>
        </authorList>
    </citation>
    <scope>NUCLEOTIDE SEQUENCE [LARGE SCALE GENOMIC DNA]</scope>
    <source>
        <strain>638</strain>
    </source>
</reference>
<organism>
    <name type="scientific">Enterobacter sp. (strain 638)</name>
    <dbReference type="NCBI Taxonomy" id="399742"/>
    <lineage>
        <taxon>Bacteria</taxon>
        <taxon>Pseudomonadati</taxon>
        <taxon>Pseudomonadota</taxon>
        <taxon>Gammaproteobacteria</taxon>
        <taxon>Enterobacterales</taxon>
        <taxon>Enterobacteriaceae</taxon>
        <taxon>Enterobacter</taxon>
    </lineage>
</organism>
<sequence length="246" mass="26173">MAGHSKWANTKHRKAAQDAKRGKIFTKIIRELVTAARLGGGDAGSNPRLRAAIDKALANNMTRDTLNRAIARGVGGDDDANMETIIYEGYGPGGTAVMVECLSDNRNRTVAEVRHAFTKTGGNLGTDGSVAYLFSKKGVISFDAGDEDAIMEAALEAGAEDVVTFDDGAIDVYTAWEEMGAVRDALAAMGLKADNAEVSMIPSTKADMDAETAPKLLRLIDMLEDCDDVQEVYHNGEISDEVAATL</sequence>
<comment type="subcellular location">
    <subcellularLocation>
        <location evidence="1">Cytoplasm</location>
    </subcellularLocation>
</comment>
<comment type="similarity">
    <text evidence="1">Belongs to the TACO1 family.</text>
</comment>
<accession>A4WBM1</accession>
<protein>
    <recommendedName>
        <fullName evidence="1">Probable transcriptional regulatory protein Ent638_2432</fullName>
    </recommendedName>
</protein>
<gene>
    <name type="ordered locus">Ent638_2432</name>
</gene>